<reference key="1">
    <citation type="journal article" date="2000" name="Nature">
        <title>The genome sequence of the plant pathogen Xylella fastidiosa.</title>
        <authorList>
            <person name="Simpson A.J.G."/>
            <person name="Reinach F.C."/>
            <person name="Arruda P."/>
            <person name="Abreu F.A."/>
            <person name="Acencio M."/>
            <person name="Alvarenga R."/>
            <person name="Alves L.M.C."/>
            <person name="Araya J.E."/>
            <person name="Baia G.S."/>
            <person name="Baptista C.S."/>
            <person name="Barros M.H."/>
            <person name="Bonaccorsi E.D."/>
            <person name="Bordin S."/>
            <person name="Bove J.M."/>
            <person name="Briones M.R.S."/>
            <person name="Bueno M.R.P."/>
            <person name="Camargo A.A."/>
            <person name="Camargo L.E.A."/>
            <person name="Carraro D.M."/>
            <person name="Carrer H."/>
            <person name="Colauto N.B."/>
            <person name="Colombo C."/>
            <person name="Costa F.F."/>
            <person name="Costa M.C.R."/>
            <person name="Costa-Neto C.M."/>
            <person name="Coutinho L.L."/>
            <person name="Cristofani M."/>
            <person name="Dias-Neto E."/>
            <person name="Docena C."/>
            <person name="El-Dorry H."/>
            <person name="Facincani A.P."/>
            <person name="Ferreira A.J.S."/>
            <person name="Ferreira V.C.A."/>
            <person name="Ferro J.A."/>
            <person name="Fraga J.S."/>
            <person name="Franca S.C."/>
            <person name="Franco M.C."/>
            <person name="Frohme M."/>
            <person name="Furlan L.R."/>
            <person name="Garnier M."/>
            <person name="Goldman G.H."/>
            <person name="Goldman M.H.S."/>
            <person name="Gomes S.L."/>
            <person name="Gruber A."/>
            <person name="Ho P.L."/>
            <person name="Hoheisel J.D."/>
            <person name="Junqueira M.L."/>
            <person name="Kemper E.L."/>
            <person name="Kitajima J.P."/>
            <person name="Krieger J.E."/>
            <person name="Kuramae E.E."/>
            <person name="Laigret F."/>
            <person name="Lambais M.R."/>
            <person name="Leite L.C.C."/>
            <person name="Lemos E.G.M."/>
            <person name="Lemos M.V.F."/>
            <person name="Lopes S.A."/>
            <person name="Lopes C.R."/>
            <person name="Machado J.A."/>
            <person name="Machado M.A."/>
            <person name="Madeira A.M.B.N."/>
            <person name="Madeira H.M.F."/>
            <person name="Marino C.L."/>
            <person name="Marques M.V."/>
            <person name="Martins E.A.L."/>
            <person name="Martins E.M.F."/>
            <person name="Matsukuma A.Y."/>
            <person name="Menck C.F.M."/>
            <person name="Miracca E.C."/>
            <person name="Miyaki C.Y."/>
            <person name="Monteiro-Vitorello C.B."/>
            <person name="Moon D.H."/>
            <person name="Nagai M.A."/>
            <person name="Nascimento A.L.T.O."/>
            <person name="Netto L.E.S."/>
            <person name="Nhani A. Jr."/>
            <person name="Nobrega F.G."/>
            <person name="Nunes L.R."/>
            <person name="Oliveira M.A."/>
            <person name="de Oliveira M.C."/>
            <person name="de Oliveira R.C."/>
            <person name="Palmieri D.A."/>
            <person name="Paris A."/>
            <person name="Peixoto B.R."/>
            <person name="Pereira G.A.G."/>
            <person name="Pereira H.A. Jr."/>
            <person name="Pesquero J.B."/>
            <person name="Quaggio R.B."/>
            <person name="Roberto P.G."/>
            <person name="Rodrigues V."/>
            <person name="de Rosa A.J.M."/>
            <person name="de Rosa V.E. Jr."/>
            <person name="de Sa R.G."/>
            <person name="Santelli R.V."/>
            <person name="Sawasaki H.E."/>
            <person name="da Silva A.C.R."/>
            <person name="da Silva A.M."/>
            <person name="da Silva F.R."/>
            <person name="Silva W.A. Jr."/>
            <person name="da Silveira J.F."/>
            <person name="Silvestri M.L.Z."/>
            <person name="Siqueira W.J."/>
            <person name="de Souza A.A."/>
            <person name="de Souza A.P."/>
            <person name="Terenzi M.F."/>
            <person name="Truffi D."/>
            <person name="Tsai S.M."/>
            <person name="Tsuhako M.H."/>
            <person name="Vallada H."/>
            <person name="Van Sluys M.A."/>
            <person name="Verjovski-Almeida S."/>
            <person name="Vettore A.L."/>
            <person name="Zago M.A."/>
            <person name="Zatz M."/>
            <person name="Meidanis J."/>
            <person name="Setubal J.C."/>
        </authorList>
    </citation>
    <scope>NUCLEOTIDE SEQUENCE [LARGE SCALE GENOMIC DNA]</scope>
    <source>
        <strain>9a5c</strain>
    </source>
</reference>
<accession>Q9PBI6</accession>
<organism>
    <name type="scientific">Xylella fastidiosa (strain 9a5c)</name>
    <dbReference type="NCBI Taxonomy" id="160492"/>
    <lineage>
        <taxon>Bacteria</taxon>
        <taxon>Pseudomonadati</taxon>
        <taxon>Pseudomonadota</taxon>
        <taxon>Gammaproteobacteria</taxon>
        <taxon>Lysobacterales</taxon>
        <taxon>Lysobacteraceae</taxon>
        <taxon>Xylella</taxon>
    </lineage>
</organism>
<name>RNH_XYLFA</name>
<dbReference type="EC" id="3.1.26.4" evidence="1"/>
<dbReference type="EMBL" id="AE003849">
    <property type="protein sequence ID" value="AAF84957.1"/>
    <property type="status" value="ALT_INIT"/>
    <property type="molecule type" value="Genomic_DNA"/>
</dbReference>
<dbReference type="PIR" id="F82591">
    <property type="entry name" value="F82591"/>
</dbReference>
<dbReference type="RefSeq" id="WP_004086121.1">
    <property type="nucleotide sequence ID" value="NC_002488.3"/>
</dbReference>
<dbReference type="SMR" id="Q9PBI6"/>
<dbReference type="STRING" id="160492.XF_2158"/>
<dbReference type="KEGG" id="xfa:XF_2158"/>
<dbReference type="eggNOG" id="COG0328">
    <property type="taxonomic scope" value="Bacteria"/>
</dbReference>
<dbReference type="HOGENOM" id="CLU_030894_6_0_6"/>
<dbReference type="Proteomes" id="UP000000812">
    <property type="component" value="Chromosome"/>
</dbReference>
<dbReference type="GO" id="GO:0005737">
    <property type="term" value="C:cytoplasm"/>
    <property type="evidence" value="ECO:0007669"/>
    <property type="project" value="UniProtKB-SubCell"/>
</dbReference>
<dbReference type="GO" id="GO:0000287">
    <property type="term" value="F:magnesium ion binding"/>
    <property type="evidence" value="ECO:0007669"/>
    <property type="project" value="UniProtKB-UniRule"/>
</dbReference>
<dbReference type="GO" id="GO:0003676">
    <property type="term" value="F:nucleic acid binding"/>
    <property type="evidence" value="ECO:0007669"/>
    <property type="project" value="InterPro"/>
</dbReference>
<dbReference type="GO" id="GO:0004523">
    <property type="term" value="F:RNA-DNA hybrid ribonuclease activity"/>
    <property type="evidence" value="ECO:0007669"/>
    <property type="project" value="UniProtKB-UniRule"/>
</dbReference>
<dbReference type="GO" id="GO:0043137">
    <property type="term" value="P:DNA replication, removal of RNA primer"/>
    <property type="evidence" value="ECO:0007669"/>
    <property type="project" value="TreeGrafter"/>
</dbReference>
<dbReference type="CDD" id="cd09278">
    <property type="entry name" value="RNase_HI_prokaryote_like"/>
    <property type="match status" value="1"/>
</dbReference>
<dbReference type="FunFam" id="3.30.420.10:FF:000089">
    <property type="entry name" value="Ribonuclease H"/>
    <property type="match status" value="1"/>
</dbReference>
<dbReference type="Gene3D" id="3.30.420.10">
    <property type="entry name" value="Ribonuclease H-like superfamily/Ribonuclease H"/>
    <property type="match status" value="1"/>
</dbReference>
<dbReference type="HAMAP" id="MF_00042">
    <property type="entry name" value="RNase_H"/>
    <property type="match status" value="1"/>
</dbReference>
<dbReference type="InterPro" id="IPR050092">
    <property type="entry name" value="RNase_H"/>
</dbReference>
<dbReference type="InterPro" id="IPR012337">
    <property type="entry name" value="RNaseH-like_sf"/>
</dbReference>
<dbReference type="InterPro" id="IPR002156">
    <property type="entry name" value="RNaseH_domain"/>
</dbReference>
<dbReference type="InterPro" id="IPR036397">
    <property type="entry name" value="RNaseH_sf"/>
</dbReference>
<dbReference type="InterPro" id="IPR022892">
    <property type="entry name" value="RNaseHI"/>
</dbReference>
<dbReference type="NCBIfam" id="NF001236">
    <property type="entry name" value="PRK00203.1"/>
    <property type="match status" value="1"/>
</dbReference>
<dbReference type="PANTHER" id="PTHR10642">
    <property type="entry name" value="RIBONUCLEASE H1"/>
    <property type="match status" value="1"/>
</dbReference>
<dbReference type="PANTHER" id="PTHR10642:SF26">
    <property type="entry name" value="RIBONUCLEASE H1"/>
    <property type="match status" value="1"/>
</dbReference>
<dbReference type="Pfam" id="PF00075">
    <property type="entry name" value="RNase_H"/>
    <property type="match status" value="1"/>
</dbReference>
<dbReference type="SUPFAM" id="SSF53098">
    <property type="entry name" value="Ribonuclease H-like"/>
    <property type="match status" value="1"/>
</dbReference>
<dbReference type="PROSITE" id="PS50879">
    <property type="entry name" value="RNASE_H_1"/>
    <property type="match status" value="1"/>
</dbReference>
<feature type="chain" id="PRO_0000195425" description="Ribonuclease HI">
    <location>
        <begin position="1"/>
        <end position="150"/>
    </location>
</feature>
<feature type="domain" description="RNase H type-1" evidence="2">
    <location>
        <begin position="1"/>
        <end position="141"/>
    </location>
</feature>
<feature type="binding site" evidence="1">
    <location>
        <position position="9"/>
    </location>
    <ligand>
        <name>Mg(2+)</name>
        <dbReference type="ChEBI" id="CHEBI:18420"/>
        <label>1</label>
    </ligand>
</feature>
<feature type="binding site" evidence="1">
    <location>
        <position position="9"/>
    </location>
    <ligand>
        <name>Mg(2+)</name>
        <dbReference type="ChEBI" id="CHEBI:18420"/>
        <label>2</label>
    </ligand>
</feature>
<feature type="binding site" evidence="1">
    <location>
        <position position="47"/>
    </location>
    <ligand>
        <name>Mg(2+)</name>
        <dbReference type="ChEBI" id="CHEBI:18420"/>
        <label>1</label>
    </ligand>
</feature>
<feature type="binding site" evidence="1">
    <location>
        <position position="69"/>
    </location>
    <ligand>
        <name>Mg(2+)</name>
        <dbReference type="ChEBI" id="CHEBI:18420"/>
        <label>1</label>
    </ligand>
</feature>
<feature type="binding site" evidence="1">
    <location>
        <position position="133"/>
    </location>
    <ligand>
        <name>Mg(2+)</name>
        <dbReference type="ChEBI" id="CHEBI:18420"/>
        <label>2</label>
    </ligand>
</feature>
<proteinExistence type="inferred from homology"/>
<keyword id="KW-0963">Cytoplasm</keyword>
<keyword id="KW-0255">Endonuclease</keyword>
<keyword id="KW-0378">Hydrolase</keyword>
<keyword id="KW-0460">Magnesium</keyword>
<keyword id="KW-0479">Metal-binding</keyword>
<keyword id="KW-0540">Nuclease</keyword>
<gene>
    <name evidence="1" type="primary">rnhA</name>
    <name type="ordered locus">XF_2158</name>
</gene>
<evidence type="ECO:0000255" key="1">
    <source>
        <dbReference type="HAMAP-Rule" id="MF_00042"/>
    </source>
</evidence>
<evidence type="ECO:0000255" key="2">
    <source>
        <dbReference type="PROSITE-ProRule" id="PRU00408"/>
    </source>
</evidence>
<evidence type="ECO:0000305" key="3"/>
<comment type="function">
    <text evidence="1">Endonuclease that specifically degrades the RNA of RNA-DNA hybrids.</text>
</comment>
<comment type="catalytic activity">
    <reaction evidence="1">
        <text>Endonucleolytic cleavage to 5'-phosphomonoester.</text>
        <dbReference type="EC" id="3.1.26.4"/>
    </reaction>
</comment>
<comment type="cofactor">
    <cofactor evidence="1">
        <name>Mg(2+)</name>
        <dbReference type="ChEBI" id="CHEBI:18420"/>
    </cofactor>
    <text evidence="1">Binds 1 Mg(2+) ion per subunit. May bind a second metal ion at a regulatory site, or after substrate binding.</text>
</comment>
<comment type="subunit">
    <text evidence="1">Monomer.</text>
</comment>
<comment type="subcellular location">
    <subcellularLocation>
        <location evidence="1">Cytoplasm</location>
    </subcellularLocation>
</comment>
<comment type="similarity">
    <text evidence="1">Belongs to the RNase H family.</text>
</comment>
<comment type="sequence caution" evidence="3">
    <conflict type="erroneous initiation">
        <sequence resource="EMBL-CDS" id="AAF84957"/>
    </conflict>
</comment>
<protein>
    <recommendedName>
        <fullName evidence="1">Ribonuclease HI</fullName>
        <shortName evidence="1">RNase HI</shortName>
        <ecNumber evidence="1">3.1.26.4</ecNumber>
    </recommendedName>
</protein>
<sequence>MKSINAYTDGSCLGNPGPGGWAVLLRYKNNEKELVGGELDTTNNRMELMAAIMALERLSEPCQIKLHTDSQYVRQGITEWMSGWVRRGWKTAAGDPVKNRDLWERLCAATQRHMVEWCWVKAHNGDSDNERVDVLARGQAMAQRSTVASR</sequence>